<evidence type="ECO:0000255" key="1">
    <source>
        <dbReference type="HAMAP-Rule" id="MF_00286"/>
    </source>
</evidence>
<reference key="1">
    <citation type="journal article" date="2009" name="Genome Biol.">
        <title>Genomic and genetic analyses of diversity and plant interactions of Pseudomonas fluorescens.</title>
        <authorList>
            <person name="Silby M.W."/>
            <person name="Cerdeno-Tarraga A.M."/>
            <person name="Vernikos G.S."/>
            <person name="Giddens S.R."/>
            <person name="Jackson R.W."/>
            <person name="Preston G.M."/>
            <person name="Zhang X.-X."/>
            <person name="Moon C.D."/>
            <person name="Gehrig S.M."/>
            <person name="Godfrey S.A.C."/>
            <person name="Knight C.G."/>
            <person name="Malone J.G."/>
            <person name="Robinson Z."/>
            <person name="Spiers A.J."/>
            <person name="Harris S."/>
            <person name="Challis G.L."/>
            <person name="Yaxley A.M."/>
            <person name="Harris D."/>
            <person name="Seeger K."/>
            <person name="Murphy L."/>
            <person name="Rutter S."/>
            <person name="Squares R."/>
            <person name="Quail M.A."/>
            <person name="Saunders E."/>
            <person name="Mavromatis K."/>
            <person name="Brettin T.S."/>
            <person name="Bentley S.D."/>
            <person name="Hothersall J."/>
            <person name="Stephens E."/>
            <person name="Thomas C.M."/>
            <person name="Parkhill J."/>
            <person name="Levy S.B."/>
            <person name="Rainey P.B."/>
            <person name="Thomson N.R."/>
        </authorList>
    </citation>
    <scope>NUCLEOTIDE SEQUENCE [LARGE SCALE GENOMIC DNA]</scope>
    <source>
        <strain>Pf0-1</strain>
    </source>
</reference>
<comment type="function">
    <text evidence="1">Required for disulfide bond formation in some periplasmic proteins. Acts by oxidizing the DsbA protein.</text>
</comment>
<comment type="subcellular location">
    <subcellularLocation>
        <location evidence="1">Cell inner membrane</location>
        <topology evidence="1">Multi-pass membrane protein</topology>
    </subcellularLocation>
</comment>
<comment type="similarity">
    <text evidence="1">Belongs to the DsbB family.</text>
</comment>
<gene>
    <name evidence="1" type="primary">dsbB2</name>
    <name type="ordered locus">Pfl01_5483</name>
</gene>
<dbReference type="EMBL" id="CP000094">
    <property type="protein sequence ID" value="ABA77220.1"/>
    <property type="molecule type" value="Genomic_DNA"/>
</dbReference>
<dbReference type="RefSeq" id="WP_011336511.1">
    <property type="nucleotide sequence ID" value="NC_007492.2"/>
</dbReference>
<dbReference type="KEGG" id="pfo:Pfl01_5483"/>
<dbReference type="eggNOG" id="COG1495">
    <property type="taxonomic scope" value="Bacteria"/>
</dbReference>
<dbReference type="HOGENOM" id="CLU_098660_1_1_6"/>
<dbReference type="Proteomes" id="UP000002704">
    <property type="component" value="Chromosome"/>
</dbReference>
<dbReference type="GO" id="GO:0005886">
    <property type="term" value="C:plasma membrane"/>
    <property type="evidence" value="ECO:0007669"/>
    <property type="project" value="UniProtKB-SubCell"/>
</dbReference>
<dbReference type="GO" id="GO:0009055">
    <property type="term" value="F:electron transfer activity"/>
    <property type="evidence" value="ECO:0007669"/>
    <property type="project" value="UniProtKB-UniRule"/>
</dbReference>
<dbReference type="GO" id="GO:0015035">
    <property type="term" value="F:protein-disulfide reductase activity"/>
    <property type="evidence" value="ECO:0007669"/>
    <property type="project" value="UniProtKB-UniRule"/>
</dbReference>
<dbReference type="GO" id="GO:0006457">
    <property type="term" value="P:protein folding"/>
    <property type="evidence" value="ECO:0007669"/>
    <property type="project" value="InterPro"/>
</dbReference>
<dbReference type="Gene3D" id="1.20.1550.10">
    <property type="entry name" value="DsbB-like"/>
    <property type="match status" value="1"/>
</dbReference>
<dbReference type="HAMAP" id="MF_00286">
    <property type="entry name" value="DsbB"/>
    <property type="match status" value="1"/>
</dbReference>
<dbReference type="InterPro" id="IPR003752">
    <property type="entry name" value="DiS_bond_form_DsbB/BdbC"/>
</dbReference>
<dbReference type="InterPro" id="IPR022920">
    <property type="entry name" value="Disulphide_bond_form_DsbB"/>
</dbReference>
<dbReference type="InterPro" id="IPR050183">
    <property type="entry name" value="DsbB"/>
</dbReference>
<dbReference type="InterPro" id="IPR023380">
    <property type="entry name" value="DsbB-like_sf"/>
</dbReference>
<dbReference type="PANTHER" id="PTHR36570">
    <property type="entry name" value="DISULFIDE BOND FORMATION PROTEIN B"/>
    <property type="match status" value="1"/>
</dbReference>
<dbReference type="PANTHER" id="PTHR36570:SF3">
    <property type="entry name" value="DISULFIDE BOND FORMATION PROTEIN B"/>
    <property type="match status" value="1"/>
</dbReference>
<dbReference type="Pfam" id="PF02600">
    <property type="entry name" value="DsbB"/>
    <property type="match status" value="1"/>
</dbReference>
<dbReference type="SUPFAM" id="SSF158442">
    <property type="entry name" value="DsbB-like"/>
    <property type="match status" value="1"/>
</dbReference>
<proteinExistence type="inferred from homology"/>
<keyword id="KW-0997">Cell inner membrane</keyword>
<keyword id="KW-1003">Cell membrane</keyword>
<keyword id="KW-0143">Chaperone</keyword>
<keyword id="KW-1015">Disulfide bond</keyword>
<keyword id="KW-0249">Electron transport</keyword>
<keyword id="KW-0472">Membrane</keyword>
<keyword id="KW-0560">Oxidoreductase</keyword>
<keyword id="KW-0676">Redox-active center</keyword>
<keyword id="KW-0812">Transmembrane</keyword>
<keyword id="KW-1133">Transmembrane helix</keyword>
<keyword id="KW-0813">Transport</keyword>
<sequence>MSLACSRSLFFMAFTAGILALGASYYLEYAVGLVPCSLCLVQRLFMSVLTLCCGLAAVHGPQRVGLSLYWMVTLLSSLGGTTAAWRQVLFQSDSLQELAHCAPNPEEMFSSLPWLCALMRMFNDTADCAELSWTLFDLSIPEWSLLFFVGMSILAVYQLLRQVWMALQRPLSGQPSHPALVRD</sequence>
<accession>Q3K4T4</accession>
<feature type="chain" id="PRO_0000298390" description="Disulfide bond formation protein B 2">
    <location>
        <begin position="1"/>
        <end position="183"/>
    </location>
</feature>
<feature type="topological domain" description="Cytoplasmic" evidence="1">
    <location>
        <begin position="1"/>
        <end position="9"/>
    </location>
</feature>
<feature type="transmembrane region" description="Helical" evidence="1">
    <location>
        <begin position="10"/>
        <end position="26"/>
    </location>
</feature>
<feature type="topological domain" description="Periplasmic" evidence="1">
    <location>
        <begin position="27"/>
        <end position="44"/>
    </location>
</feature>
<feature type="transmembrane region" description="Helical" evidence="1">
    <location>
        <begin position="45"/>
        <end position="61"/>
    </location>
</feature>
<feature type="topological domain" description="Cytoplasmic" evidence="1">
    <location>
        <begin position="62"/>
        <end position="68"/>
    </location>
</feature>
<feature type="transmembrane region" description="Helical" evidence="1">
    <location>
        <begin position="69"/>
        <end position="85"/>
    </location>
</feature>
<feature type="topological domain" description="Periplasmic" evidence="1">
    <location>
        <begin position="86"/>
        <end position="142"/>
    </location>
</feature>
<feature type="transmembrane region" description="Helical" evidence="1">
    <location>
        <begin position="143"/>
        <end position="161"/>
    </location>
</feature>
<feature type="topological domain" description="Cytoplasmic" evidence="1">
    <location>
        <begin position="162"/>
        <end position="183"/>
    </location>
</feature>
<feature type="disulfide bond" description="Redox-active" evidence="1">
    <location>
        <begin position="36"/>
        <end position="39"/>
    </location>
</feature>
<feature type="disulfide bond" description="Redox-active" evidence="1">
    <location>
        <begin position="101"/>
        <end position="128"/>
    </location>
</feature>
<organism>
    <name type="scientific">Pseudomonas fluorescens (strain Pf0-1)</name>
    <dbReference type="NCBI Taxonomy" id="205922"/>
    <lineage>
        <taxon>Bacteria</taxon>
        <taxon>Pseudomonadati</taxon>
        <taxon>Pseudomonadota</taxon>
        <taxon>Gammaproteobacteria</taxon>
        <taxon>Pseudomonadales</taxon>
        <taxon>Pseudomonadaceae</taxon>
        <taxon>Pseudomonas</taxon>
    </lineage>
</organism>
<name>DSBB2_PSEPF</name>
<protein>
    <recommendedName>
        <fullName evidence="1">Disulfide bond formation protein B 2</fullName>
    </recommendedName>
    <alternativeName>
        <fullName evidence="1">Disulfide oxidoreductase 2</fullName>
    </alternativeName>
</protein>